<proteinExistence type="inferred from homology"/>
<organism>
    <name type="scientific">Haemophilus influenzae (strain 86-028NP)</name>
    <dbReference type="NCBI Taxonomy" id="281310"/>
    <lineage>
        <taxon>Bacteria</taxon>
        <taxon>Pseudomonadati</taxon>
        <taxon>Pseudomonadota</taxon>
        <taxon>Gammaproteobacteria</taxon>
        <taxon>Pasteurellales</taxon>
        <taxon>Pasteurellaceae</taxon>
        <taxon>Haemophilus</taxon>
    </lineage>
</organism>
<keyword id="KW-0413">Isomerase</keyword>
<gene>
    <name evidence="1" type="primary">uxaC</name>
    <name type="ordered locus">NTHI0056</name>
</gene>
<name>UXAC_HAEI8</name>
<comment type="catalytic activity">
    <reaction evidence="1">
        <text>D-glucuronate = D-fructuronate</text>
        <dbReference type="Rhea" id="RHEA:13049"/>
        <dbReference type="ChEBI" id="CHEBI:58720"/>
        <dbReference type="ChEBI" id="CHEBI:59863"/>
        <dbReference type="EC" id="5.3.1.12"/>
    </reaction>
</comment>
<comment type="catalytic activity">
    <reaction evidence="1">
        <text>aldehydo-D-galacturonate = keto-D-tagaturonate</text>
        <dbReference type="Rhea" id="RHEA:27702"/>
        <dbReference type="ChEBI" id="CHEBI:12952"/>
        <dbReference type="ChEBI" id="CHEBI:17886"/>
        <dbReference type="EC" id="5.3.1.12"/>
    </reaction>
</comment>
<comment type="pathway">
    <text evidence="1">Carbohydrate metabolism; pentose and glucuronate interconversion.</text>
</comment>
<comment type="similarity">
    <text evidence="1">Belongs to the metallo-dependent hydrolases superfamily. Uronate isomerase family.</text>
</comment>
<evidence type="ECO:0000255" key="1">
    <source>
        <dbReference type="HAMAP-Rule" id="MF_00675"/>
    </source>
</evidence>
<protein>
    <recommendedName>
        <fullName evidence="1">Uronate isomerase</fullName>
        <ecNumber evidence="1">5.3.1.12</ecNumber>
    </recommendedName>
    <alternativeName>
        <fullName evidence="1">Glucuronate isomerase</fullName>
    </alternativeName>
    <alternativeName>
        <fullName evidence="1">Uronic isomerase</fullName>
    </alternativeName>
</protein>
<dbReference type="EC" id="5.3.1.12" evidence="1"/>
<dbReference type="EMBL" id="CP000057">
    <property type="protein sequence ID" value="AAX87051.1"/>
    <property type="molecule type" value="Genomic_DNA"/>
</dbReference>
<dbReference type="RefSeq" id="WP_011271795.1">
    <property type="nucleotide sequence ID" value="NC_007146.2"/>
</dbReference>
<dbReference type="SMR" id="Q4QPJ6"/>
<dbReference type="GeneID" id="93220805"/>
<dbReference type="KEGG" id="hit:NTHI0056"/>
<dbReference type="HOGENOM" id="CLU_044465_1_0_6"/>
<dbReference type="UniPathway" id="UPA00246"/>
<dbReference type="Proteomes" id="UP000002525">
    <property type="component" value="Chromosome"/>
</dbReference>
<dbReference type="GO" id="GO:0008880">
    <property type="term" value="F:glucuronate isomerase activity"/>
    <property type="evidence" value="ECO:0007669"/>
    <property type="project" value="UniProtKB-UniRule"/>
</dbReference>
<dbReference type="GO" id="GO:0019698">
    <property type="term" value="P:D-galacturonate catabolic process"/>
    <property type="evidence" value="ECO:0007669"/>
    <property type="project" value="TreeGrafter"/>
</dbReference>
<dbReference type="GO" id="GO:0042840">
    <property type="term" value="P:D-glucuronate catabolic process"/>
    <property type="evidence" value="ECO:0007669"/>
    <property type="project" value="TreeGrafter"/>
</dbReference>
<dbReference type="Gene3D" id="3.20.20.140">
    <property type="entry name" value="Metal-dependent hydrolases"/>
    <property type="match status" value="1"/>
</dbReference>
<dbReference type="Gene3D" id="1.10.2020.10">
    <property type="entry name" value="uronate isomerase, domain 2, chain A"/>
    <property type="match status" value="1"/>
</dbReference>
<dbReference type="HAMAP" id="MF_00675">
    <property type="entry name" value="UxaC"/>
    <property type="match status" value="1"/>
</dbReference>
<dbReference type="InterPro" id="IPR032466">
    <property type="entry name" value="Metal_Hydrolase"/>
</dbReference>
<dbReference type="InterPro" id="IPR003766">
    <property type="entry name" value="Uronate_isomerase"/>
</dbReference>
<dbReference type="NCBIfam" id="NF002794">
    <property type="entry name" value="PRK02925.1"/>
    <property type="match status" value="1"/>
</dbReference>
<dbReference type="PANTHER" id="PTHR30068">
    <property type="entry name" value="URONATE ISOMERASE"/>
    <property type="match status" value="1"/>
</dbReference>
<dbReference type="PANTHER" id="PTHR30068:SF4">
    <property type="entry name" value="URONATE ISOMERASE"/>
    <property type="match status" value="1"/>
</dbReference>
<dbReference type="Pfam" id="PF02614">
    <property type="entry name" value="UxaC"/>
    <property type="match status" value="1"/>
</dbReference>
<dbReference type="SUPFAM" id="SSF51556">
    <property type="entry name" value="Metallo-dependent hydrolases"/>
    <property type="match status" value="1"/>
</dbReference>
<sequence>MKQFMDENFLLSTDTAKILYHDYAKNKPIFDYHCHLNPREVAENRQFNDLAEIWLEGDHYKWRALRTAGVPEELITGKATNYQKYLAWAKTVPLCIGNPIYHWTHLELRRPFGITNMLFNPQNAEKIWHQCNEMLQQPEFSARGIMQKMNVKLVGTTDDPIDSLQYHQAIKNDESFDIDVVPSWRPDKVFKIELPQFNDYLVQLSEIADVDIYTFADLKKALLKRLEYFDAQGCKSADHGMEIVRFSAIPDESVLNSILQKRLQNQPLLEEEVAQFSTAILVWLASEYCKRHWVMQMHIGAIRNNNSRMFALLGADSGFDSIGDRTYAYPLSRLLDAMDKENQLPKTILYCLNPRDNEMIASMIGNFQGDGIAGKIQFGSGWWFNDQKDGMERQLQQLSQLGLLSQFVGMLTDSRSFLSYTRHEYFRRILCEMIGGWVEKGEAPNDISLLGKMIEDICFNNAKNYFK</sequence>
<accession>Q4QPJ6</accession>
<feature type="chain" id="PRO_1000044768" description="Uronate isomerase">
    <location>
        <begin position="1"/>
        <end position="467"/>
    </location>
</feature>
<reference key="1">
    <citation type="journal article" date="2005" name="J. Bacteriol.">
        <title>Genomic sequence of an otitis media isolate of nontypeable Haemophilus influenzae: comparative study with H. influenzae serotype d, strain KW20.</title>
        <authorList>
            <person name="Harrison A."/>
            <person name="Dyer D.W."/>
            <person name="Gillaspy A."/>
            <person name="Ray W.C."/>
            <person name="Mungur R."/>
            <person name="Carson M.B."/>
            <person name="Zhong H."/>
            <person name="Gipson J."/>
            <person name="Gipson M."/>
            <person name="Johnson L.S."/>
            <person name="Lewis L."/>
            <person name="Bakaletz L.O."/>
            <person name="Munson R.S. Jr."/>
        </authorList>
    </citation>
    <scope>NUCLEOTIDE SEQUENCE [LARGE SCALE GENOMIC DNA]</scope>
    <source>
        <strain>86-028NP</strain>
    </source>
</reference>